<proteinExistence type="inferred from homology"/>
<protein>
    <recommendedName>
        <fullName evidence="1">Phosphate acyltransferase</fullName>
        <ecNumber evidence="1">2.3.1.274</ecNumber>
    </recommendedName>
    <alternativeName>
        <fullName evidence="1">Acyl-ACP phosphotransacylase</fullName>
    </alternativeName>
    <alternativeName>
        <fullName evidence="1">Acyl-[acyl-carrier-protein]--phosphate acyltransferase</fullName>
    </alternativeName>
    <alternativeName>
        <fullName evidence="1">Phosphate-acyl-ACP acyltransferase</fullName>
    </alternativeName>
</protein>
<evidence type="ECO:0000255" key="1">
    <source>
        <dbReference type="HAMAP-Rule" id="MF_00019"/>
    </source>
</evidence>
<feature type="chain" id="PRO_0000189876" description="Phosphate acyltransferase">
    <location>
        <begin position="1"/>
        <end position="356"/>
    </location>
</feature>
<gene>
    <name evidence="1" type="primary">plsX</name>
    <name type="ordered locus">c1359</name>
</gene>
<name>PLSX_ECOL6</name>
<keyword id="KW-0963">Cytoplasm</keyword>
<keyword id="KW-0444">Lipid biosynthesis</keyword>
<keyword id="KW-0443">Lipid metabolism</keyword>
<keyword id="KW-0594">Phospholipid biosynthesis</keyword>
<keyword id="KW-1208">Phospholipid metabolism</keyword>
<keyword id="KW-1185">Reference proteome</keyword>
<keyword id="KW-0808">Transferase</keyword>
<comment type="function">
    <text evidence="1">Catalyzes the reversible formation of acyl-phosphate (acyl-PO(4)) from acyl-[acyl-carrier-protein] (acyl-ACP). This enzyme utilizes acyl-ACP as fatty acyl donor, but not acyl-CoA.</text>
</comment>
<comment type="catalytic activity">
    <reaction evidence="1">
        <text>a fatty acyl-[ACP] + phosphate = an acyl phosphate + holo-[ACP]</text>
        <dbReference type="Rhea" id="RHEA:42292"/>
        <dbReference type="Rhea" id="RHEA-COMP:9685"/>
        <dbReference type="Rhea" id="RHEA-COMP:14125"/>
        <dbReference type="ChEBI" id="CHEBI:43474"/>
        <dbReference type="ChEBI" id="CHEBI:59918"/>
        <dbReference type="ChEBI" id="CHEBI:64479"/>
        <dbReference type="ChEBI" id="CHEBI:138651"/>
        <dbReference type="EC" id="2.3.1.274"/>
    </reaction>
</comment>
<comment type="pathway">
    <text evidence="1">Lipid metabolism; phospholipid metabolism.</text>
</comment>
<comment type="subunit">
    <text evidence="1">Homodimer. Probably interacts with PlsY.</text>
</comment>
<comment type="subcellular location">
    <subcellularLocation>
        <location evidence="1">Cytoplasm</location>
    </subcellularLocation>
    <text evidence="1">Associated with the membrane possibly through PlsY.</text>
</comment>
<comment type="similarity">
    <text evidence="1">Belongs to the PlsX family.</text>
</comment>
<accession>P65736</accession>
<accession>Q8X8J0</accession>
<sequence length="356" mass="38224">MTRLTLALDVMGGDFGPSVTVPAALQALNSNSQLTLLLVGNPDAITPLLAKADFEQRSRLQIIPAQSVIASDARPSQAIRASRGSSMRVALELVKEGRAQACVSAGNTGALMGLAKLLLKPLEGIERPALVTVLPHQQKGKTVVLDLGANVDCDSTMLVQFAIMGSVLAEEVVEIPNPRVALLNIGEEEVKGLDSIRDASAVLKTIPSINYIGYLEANELLTGKTDVLVCDGFTGNVTLKTMEGVVRMFLSLLKSQGEGKKRSWWLLLLKRWLQKSLTRRFSHLNPDQYNGACLLGLRGTVIKSHGAANQRAFAVAIEQAVQAVQRQVPQRIAARLESVYPAGFELLDGGKSGTLR</sequence>
<dbReference type="EC" id="2.3.1.274" evidence="1"/>
<dbReference type="EMBL" id="AE014075">
    <property type="protein sequence ID" value="AAN79830.1"/>
    <property type="molecule type" value="Genomic_DNA"/>
</dbReference>
<dbReference type="RefSeq" id="WP_000197578.1">
    <property type="nucleotide sequence ID" value="NZ_CP051263.1"/>
</dbReference>
<dbReference type="SMR" id="P65736"/>
<dbReference type="STRING" id="199310.c1359"/>
<dbReference type="GeneID" id="93776318"/>
<dbReference type="KEGG" id="ecc:c1359"/>
<dbReference type="eggNOG" id="COG0416">
    <property type="taxonomic scope" value="Bacteria"/>
</dbReference>
<dbReference type="HOGENOM" id="CLU_039379_1_0_6"/>
<dbReference type="BioCyc" id="ECOL199310:C1359-MONOMER"/>
<dbReference type="UniPathway" id="UPA00085"/>
<dbReference type="Proteomes" id="UP000001410">
    <property type="component" value="Chromosome"/>
</dbReference>
<dbReference type="GO" id="GO:0005737">
    <property type="term" value="C:cytoplasm"/>
    <property type="evidence" value="ECO:0007669"/>
    <property type="project" value="UniProtKB-SubCell"/>
</dbReference>
<dbReference type="GO" id="GO:0043811">
    <property type="term" value="F:phosphate:acyl-[acyl carrier protein] acyltransferase activity"/>
    <property type="evidence" value="ECO:0007669"/>
    <property type="project" value="UniProtKB-UniRule"/>
</dbReference>
<dbReference type="GO" id="GO:0006633">
    <property type="term" value="P:fatty acid biosynthetic process"/>
    <property type="evidence" value="ECO:0007669"/>
    <property type="project" value="UniProtKB-UniRule"/>
</dbReference>
<dbReference type="GO" id="GO:0008654">
    <property type="term" value="P:phospholipid biosynthetic process"/>
    <property type="evidence" value="ECO:0007669"/>
    <property type="project" value="UniProtKB-KW"/>
</dbReference>
<dbReference type="FunFam" id="3.40.718.10:FF:000008">
    <property type="entry name" value="Phosphate acyltransferase"/>
    <property type="match status" value="1"/>
</dbReference>
<dbReference type="Gene3D" id="3.40.718.10">
    <property type="entry name" value="Isopropylmalate Dehydrogenase"/>
    <property type="match status" value="1"/>
</dbReference>
<dbReference type="HAMAP" id="MF_00019">
    <property type="entry name" value="PlsX"/>
    <property type="match status" value="1"/>
</dbReference>
<dbReference type="InterPro" id="IPR003664">
    <property type="entry name" value="FA_synthesis"/>
</dbReference>
<dbReference type="InterPro" id="IPR012281">
    <property type="entry name" value="Phospholipid_synth_PlsX-like"/>
</dbReference>
<dbReference type="NCBIfam" id="TIGR00182">
    <property type="entry name" value="plsX"/>
    <property type="match status" value="1"/>
</dbReference>
<dbReference type="PANTHER" id="PTHR30100">
    <property type="entry name" value="FATTY ACID/PHOSPHOLIPID SYNTHESIS PROTEIN PLSX"/>
    <property type="match status" value="1"/>
</dbReference>
<dbReference type="PANTHER" id="PTHR30100:SF1">
    <property type="entry name" value="PHOSPHATE ACYLTRANSFERASE"/>
    <property type="match status" value="1"/>
</dbReference>
<dbReference type="Pfam" id="PF02504">
    <property type="entry name" value="FA_synthesis"/>
    <property type="match status" value="1"/>
</dbReference>
<dbReference type="PIRSF" id="PIRSF002465">
    <property type="entry name" value="Phsphlp_syn_PlsX"/>
    <property type="match status" value="1"/>
</dbReference>
<dbReference type="SUPFAM" id="SSF53659">
    <property type="entry name" value="Isocitrate/Isopropylmalate dehydrogenase-like"/>
    <property type="match status" value="1"/>
</dbReference>
<organism>
    <name type="scientific">Escherichia coli O6:H1 (strain CFT073 / ATCC 700928 / UPEC)</name>
    <dbReference type="NCBI Taxonomy" id="199310"/>
    <lineage>
        <taxon>Bacteria</taxon>
        <taxon>Pseudomonadati</taxon>
        <taxon>Pseudomonadota</taxon>
        <taxon>Gammaproteobacteria</taxon>
        <taxon>Enterobacterales</taxon>
        <taxon>Enterobacteriaceae</taxon>
        <taxon>Escherichia</taxon>
    </lineage>
</organism>
<reference key="1">
    <citation type="journal article" date="2002" name="Proc. Natl. Acad. Sci. U.S.A.">
        <title>Extensive mosaic structure revealed by the complete genome sequence of uropathogenic Escherichia coli.</title>
        <authorList>
            <person name="Welch R.A."/>
            <person name="Burland V."/>
            <person name="Plunkett G. III"/>
            <person name="Redford P."/>
            <person name="Roesch P."/>
            <person name="Rasko D."/>
            <person name="Buckles E.L."/>
            <person name="Liou S.-R."/>
            <person name="Boutin A."/>
            <person name="Hackett J."/>
            <person name="Stroud D."/>
            <person name="Mayhew G.F."/>
            <person name="Rose D.J."/>
            <person name="Zhou S."/>
            <person name="Schwartz D.C."/>
            <person name="Perna N.T."/>
            <person name="Mobley H.L.T."/>
            <person name="Donnenberg M.S."/>
            <person name="Blattner F.R."/>
        </authorList>
    </citation>
    <scope>NUCLEOTIDE SEQUENCE [LARGE SCALE GENOMIC DNA]</scope>
    <source>
        <strain>CFT073 / ATCC 700928 / UPEC</strain>
    </source>
</reference>